<name>GPSB_STRP4</name>
<gene>
    <name evidence="1" type="primary">gpsB</name>
    <name type="ordered locus">SPG_0337</name>
</gene>
<proteinExistence type="inferred from homology"/>
<comment type="function">
    <text evidence="1">Divisome component that associates with the complex late in its assembly, after the Z-ring is formed, and is dependent on DivIC and PBP2B for its recruitment to the divisome. Together with EzrA, is a key component of the system that regulates PBP1 localization during cell cycle progression. Its main role could be the removal of PBP1 from the cell pole after pole maturation is completed. Also contributes to the recruitment of PBP1 to the division complex. Not essential for septum formation.</text>
</comment>
<comment type="subunit">
    <text evidence="1">Forms polymers through the coiled coil domains. Interacts with PBP1, MreC and EzrA.</text>
</comment>
<comment type="subcellular location">
    <subcellularLocation>
        <location evidence="1">Cytoplasm</location>
    </subcellularLocation>
    <text evidence="1">Shuttles between the lateral wall and the division site in a cell cycle-dependent manner.</text>
</comment>
<comment type="similarity">
    <text evidence="1">Belongs to the GpsB family.</text>
</comment>
<sequence>MASIIFSAKDIFEQEFGREVRGYNKVEVDEFLDDVIKDYETYAALVKSLRQEIADLKEELTRKPKPSPVQAEPLEAAITSSMTNFDILKRLNRLEKEVFGKQILDNSDF</sequence>
<protein>
    <recommendedName>
        <fullName evidence="1">Cell cycle protein GpsB</fullName>
    </recommendedName>
    <alternativeName>
        <fullName evidence="1">Guiding PBP1-shuttling protein</fullName>
    </alternativeName>
</protein>
<organism>
    <name type="scientific">Streptococcus pneumoniae serotype 19F (strain G54)</name>
    <dbReference type="NCBI Taxonomy" id="512566"/>
    <lineage>
        <taxon>Bacteria</taxon>
        <taxon>Bacillati</taxon>
        <taxon>Bacillota</taxon>
        <taxon>Bacilli</taxon>
        <taxon>Lactobacillales</taxon>
        <taxon>Streptococcaceae</taxon>
        <taxon>Streptococcus</taxon>
    </lineage>
</organism>
<dbReference type="EMBL" id="CP001015">
    <property type="protein sequence ID" value="ACF55008.1"/>
    <property type="molecule type" value="Genomic_DNA"/>
</dbReference>
<dbReference type="SMR" id="B5E7B2"/>
<dbReference type="KEGG" id="spx:SPG_0337"/>
<dbReference type="HOGENOM" id="CLU_140309_1_0_9"/>
<dbReference type="GO" id="GO:0005737">
    <property type="term" value="C:cytoplasm"/>
    <property type="evidence" value="ECO:0007669"/>
    <property type="project" value="UniProtKB-SubCell"/>
</dbReference>
<dbReference type="GO" id="GO:0051301">
    <property type="term" value="P:cell division"/>
    <property type="evidence" value="ECO:0007669"/>
    <property type="project" value="UniProtKB-UniRule"/>
</dbReference>
<dbReference type="GO" id="GO:0008360">
    <property type="term" value="P:regulation of cell shape"/>
    <property type="evidence" value="ECO:0007669"/>
    <property type="project" value="UniProtKB-UniRule"/>
</dbReference>
<dbReference type="Gene3D" id="6.10.250.660">
    <property type="match status" value="1"/>
</dbReference>
<dbReference type="HAMAP" id="MF_02011">
    <property type="entry name" value="GpsB"/>
    <property type="match status" value="1"/>
</dbReference>
<dbReference type="InterPro" id="IPR011229">
    <property type="entry name" value="Cell_cycle_GpsB"/>
</dbReference>
<dbReference type="InterPro" id="IPR019933">
    <property type="entry name" value="DivIVA_domain"/>
</dbReference>
<dbReference type="InterPro" id="IPR007793">
    <property type="entry name" value="DivIVA_fam"/>
</dbReference>
<dbReference type="NCBIfam" id="TIGR03544">
    <property type="entry name" value="DivI1A_domain"/>
    <property type="match status" value="1"/>
</dbReference>
<dbReference type="NCBIfam" id="NF010725">
    <property type="entry name" value="PRK14127.1"/>
    <property type="match status" value="1"/>
</dbReference>
<dbReference type="PANTHER" id="PTHR35794:SF1">
    <property type="entry name" value="CELL CYCLE PROTEIN GPSB"/>
    <property type="match status" value="1"/>
</dbReference>
<dbReference type="PANTHER" id="PTHR35794">
    <property type="entry name" value="CELL DIVISION PROTEIN DIVIVA"/>
    <property type="match status" value="1"/>
</dbReference>
<dbReference type="Pfam" id="PF05103">
    <property type="entry name" value="DivIVA"/>
    <property type="match status" value="1"/>
</dbReference>
<dbReference type="PIRSF" id="PIRSF029938">
    <property type="entry name" value="UCP029938"/>
    <property type="match status" value="1"/>
</dbReference>
<evidence type="ECO:0000255" key="1">
    <source>
        <dbReference type="HAMAP-Rule" id="MF_02011"/>
    </source>
</evidence>
<feature type="chain" id="PRO_1000189497" description="Cell cycle protein GpsB">
    <location>
        <begin position="1"/>
        <end position="109"/>
    </location>
</feature>
<feature type="coiled-coil region" evidence="1">
    <location>
        <begin position="36"/>
        <end position="63"/>
    </location>
</feature>
<reference key="1">
    <citation type="journal article" date="2001" name="Microb. Drug Resist.">
        <title>Annotated draft genomic sequence from a Streptococcus pneumoniae type 19F clinical isolate.</title>
        <authorList>
            <person name="Dopazo J."/>
            <person name="Mendoza A."/>
            <person name="Herrero J."/>
            <person name="Caldara F."/>
            <person name="Humbert Y."/>
            <person name="Friedli L."/>
            <person name="Guerrier M."/>
            <person name="Grand-Schenk E."/>
            <person name="Gandin C."/>
            <person name="de Francesco M."/>
            <person name="Polissi A."/>
            <person name="Buell G."/>
            <person name="Feger G."/>
            <person name="Garcia E."/>
            <person name="Peitsch M."/>
            <person name="Garcia-Bustos J.F."/>
        </authorList>
    </citation>
    <scope>NUCLEOTIDE SEQUENCE [LARGE SCALE GENOMIC DNA]</scope>
    <source>
        <strain>G54</strain>
    </source>
</reference>
<reference key="2">
    <citation type="submission" date="2008-03" db="EMBL/GenBank/DDBJ databases">
        <title>Pneumococcal beta glucoside metabolism investigated by whole genome comparison.</title>
        <authorList>
            <person name="Mulas L."/>
            <person name="Trappetti C."/>
            <person name="Hakenbeck R."/>
            <person name="Iannelli F."/>
            <person name="Pozzi G."/>
            <person name="Davidsen T.M."/>
            <person name="Tettelin H."/>
            <person name="Oggioni M."/>
        </authorList>
    </citation>
    <scope>NUCLEOTIDE SEQUENCE [LARGE SCALE GENOMIC DNA]</scope>
    <source>
        <strain>G54</strain>
    </source>
</reference>
<keyword id="KW-0131">Cell cycle</keyword>
<keyword id="KW-0132">Cell division</keyword>
<keyword id="KW-0133">Cell shape</keyword>
<keyword id="KW-0175">Coiled coil</keyword>
<keyword id="KW-0963">Cytoplasm</keyword>
<accession>B5E7B2</accession>